<accession>P63243</accession>
<accession>P25388</accession>
<accession>P99049</accession>
<accession>Q3T0R8</accession>
<keyword id="KW-0007">Acetylation</keyword>
<keyword id="KW-0053">Apoptosis</keyword>
<keyword id="KW-0090">Biological rhythms</keyword>
<keyword id="KW-0131">Cell cycle</keyword>
<keyword id="KW-1003">Cell membrane</keyword>
<keyword id="KW-0966">Cell projection</keyword>
<keyword id="KW-0963">Cytoplasm</keyword>
<keyword id="KW-0217">Developmental protein</keyword>
<keyword id="KW-0306">Gastrulation</keyword>
<keyword id="KW-0341">Growth regulation</keyword>
<keyword id="KW-0472">Membrane</keyword>
<keyword id="KW-0539">Nucleus</keyword>
<keyword id="KW-0597">Phosphoprotein</keyword>
<keyword id="KW-1185">Reference proteome</keyword>
<keyword id="KW-0677">Repeat</keyword>
<keyword id="KW-0687">Ribonucleoprotein</keyword>
<keyword id="KW-0689">Ribosomal protein</keyword>
<keyword id="KW-0810">Translation regulation</keyword>
<keyword id="KW-0853">WD repeat</keyword>
<feature type="chain" id="PRO_0000127730" description="Small ribosomal subunit protein RACK1">
    <location>
        <begin position="1"/>
        <end position="317"/>
    </location>
</feature>
<feature type="initiator methionine" description="Removed; alternate" evidence="2">
    <location>
        <position position="1"/>
    </location>
</feature>
<feature type="chain" id="PRO_0000424479" description="Small ribosomal subunit protein RACK1, N-terminally processed">
    <location>
        <begin position="2"/>
        <end position="317"/>
    </location>
</feature>
<feature type="repeat" description="WD 1">
    <location>
        <begin position="13"/>
        <end position="44"/>
    </location>
</feature>
<feature type="repeat" description="WD 2">
    <location>
        <begin position="61"/>
        <end position="91"/>
    </location>
</feature>
<feature type="repeat" description="WD 3">
    <location>
        <begin position="103"/>
        <end position="133"/>
    </location>
</feature>
<feature type="repeat" description="WD 4">
    <location>
        <begin position="146"/>
        <end position="178"/>
    </location>
</feature>
<feature type="repeat" description="WD 5">
    <location>
        <begin position="190"/>
        <end position="220"/>
    </location>
</feature>
<feature type="repeat" description="WD 6">
    <location>
        <begin position="231"/>
        <end position="260"/>
    </location>
</feature>
<feature type="repeat" description="WD 7">
    <location>
        <begin position="281"/>
        <end position="311"/>
    </location>
</feature>
<feature type="modified residue" description="N-acetylmethionine" evidence="2">
    <location>
        <position position="1"/>
    </location>
</feature>
<feature type="modified residue" description="N-acetylthreonine; in Guanine nucleotide-binding protein subunit beta-2-like 1, N-terminally processed" evidence="2">
    <location>
        <position position="2"/>
    </location>
</feature>
<feature type="modified residue" description="Phosphothreonine" evidence="2">
    <location>
        <position position="6"/>
    </location>
</feature>
<feature type="modified residue" description="Phosphothreonine" evidence="2">
    <location>
        <position position="10"/>
    </location>
</feature>
<feature type="modified residue" description="Phosphotyrosine; by ABL1" evidence="2">
    <location>
        <position position="52"/>
    </location>
</feature>
<feature type="modified residue" description="Phosphothreonine" evidence="2">
    <location>
        <position position="96"/>
    </location>
</feature>
<feature type="modified residue" description="N6-acetyllysine" evidence="2">
    <location>
        <position position="130"/>
    </location>
</feature>
<feature type="modified residue" description="N6-acetyllysine" evidence="3">
    <location>
        <position position="183"/>
    </location>
</feature>
<feature type="modified residue" description="Phosphotyrosine" evidence="2">
    <location>
        <position position="228"/>
    </location>
</feature>
<feature type="modified residue" description="Phosphoserine" evidence="2">
    <location>
        <position position="276"/>
    </location>
</feature>
<feature type="modified residue" description="Phosphothreonine" evidence="2">
    <location>
        <position position="277"/>
    </location>
</feature>
<feature type="modified residue" description="Phosphoserine" evidence="2">
    <location>
        <position position="278"/>
    </location>
</feature>
<feature type="modified residue" description="Phosphoserine" evidence="2">
    <location>
        <position position="279"/>
    </location>
</feature>
<feature type="modified residue" description="Phosphothreonine" evidence="3">
    <location>
        <position position="316"/>
    </location>
</feature>
<feature type="sequence conflict" description="In Ref. 2; AAI02287." evidence="5" ref="2">
    <original>D</original>
    <variation>E</variation>
    <location>
        <position position="91"/>
    </location>
</feature>
<organism>
    <name type="scientific">Bos taurus</name>
    <name type="common">Bovine</name>
    <dbReference type="NCBI Taxonomy" id="9913"/>
    <lineage>
        <taxon>Eukaryota</taxon>
        <taxon>Metazoa</taxon>
        <taxon>Chordata</taxon>
        <taxon>Craniata</taxon>
        <taxon>Vertebrata</taxon>
        <taxon>Euteleostomi</taxon>
        <taxon>Mammalia</taxon>
        <taxon>Eutheria</taxon>
        <taxon>Laurasiatheria</taxon>
        <taxon>Artiodactyla</taxon>
        <taxon>Ruminantia</taxon>
        <taxon>Pecora</taxon>
        <taxon>Bovidae</taxon>
        <taxon>Bovinae</taxon>
        <taxon>Bos</taxon>
    </lineage>
</organism>
<proteinExistence type="evidence at transcript level"/>
<reference key="1">
    <citation type="journal article" date="2000" name="FASEB J.">
        <title>RACK1 is up-regulated in angiogenesis and human carcinomas.</title>
        <authorList>
            <person name="Berns H."/>
            <person name="Humar R."/>
            <person name="Hengerer B."/>
            <person name="Kiefer F.N."/>
            <person name="Battegay E.J."/>
        </authorList>
    </citation>
    <scope>NUCLEOTIDE SEQUENCE [MRNA]</scope>
    <scope>TISSUE SPECIFICITY</scope>
</reference>
<reference key="2">
    <citation type="submission" date="2005-08" db="EMBL/GenBank/DDBJ databases">
        <authorList>
            <consortium name="NIH - Mammalian Gene Collection (MGC) project"/>
        </authorList>
    </citation>
    <scope>NUCLEOTIDE SEQUENCE [LARGE SCALE MRNA]</scope>
    <source>
        <strain>Crossbred X Angus</strain>
        <tissue>Ileum</tissue>
    </source>
</reference>
<name>RACK1_BOVIN</name>
<dbReference type="EMBL" id="AJ132860">
    <property type="protein sequence ID" value="CAB64792.1"/>
    <property type="molecule type" value="mRNA"/>
</dbReference>
<dbReference type="EMBL" id="BC102286">
    <property type="protein sequence ID" value="AAI02287.2"/>
    <property type="molecule type" value="mRNA"/>
</dbReference>
<dbReference type="RefSeq" id="NP_786996.1">
    <property type="nucleotide sequence ID" value="NM_175802.3"/>
</dbReference>
<dbReference type="SMR" id="P63243"/>
<dbReference type="FunCoup" id="P63243">
    <property type="interactions" value="2989"/>
</dbReference>
<dbReference type="STRING" id="9913.ENSBTAP00000026183"/>
<dbReference type="PaxDb" id="9913-ENSBTAP00000026183"/>
<dbReference type="PeptideAtlas" id="P63243"/>
<dbReference type="GeneID" id="327682"/>
<dbReference type="KEGG" id="bta:327682"/>
<dbReference type="CTD" id="10399"/>
<dbReference type="VEuPathDB" id="HostDB:ENSBTAG00000019648"/>
<dbReference type="eggNOG" id="KOG0279">
    <property type="taxonomic scope" value="Eukaryota"/>
</dbReference>
<dbReference type="HOGENOM" id="CLU_000288_57_7_1"/>
<dbReference type="InParanoid" id="P63243"/>
<dbReference type="OMA" id="NCKLKIN"/>
<dbReference type="OrthoDB" id="7875889at2759"/>
<dbReference type="TreeFam" id="TF300600"/>
<dbReference type="Reactome" id="R-BTA-5357905">
    <property type="pathway name" value="Regulation of TNFR1 signaling"/>
</dbReference>
<dbReference type="Reactome" id="R-BTA-5357956">
    <property type="pathway name" value="TNFR1-induced NF-kappa-B signaling pathway"/>
</dbReference>
<dbReference type="Reactome" id="R-BTA-5626978">
    <property type="pathway name" value="TNFR1-mediated ceramide production"/>
</dbReference>
<dbReference type="Proteomes" id="UP000009136">
    <property type="component" value="Chromosome 7"/>
</dbReference>
<dbReference type="Bgee" id="ENSBTAG00000019648">
    <property type="expression patterns" value="Expressed in theca cell and 106 other cell types or tissues"/>
</dbReference>
<dbReference type="GO" id="GO:0005737">
    <property type="term" value="C:cytoplasm"/>
    <property type="evidence" value="ECO:0000250"/>
    <property type="project" value="UniProtKB"/>
</dbReference>
<dbReference type="GO" id="GO:0005829">
    <property type="term" value="C:cytosol"/>
    <property type="evidence" value="ECO:0000318"/>
    <property type="project" value="GO_Central"/>
</dbReference>
<dbReference type="GO" id="GO:0030425">
    <property type="term" value="C:dendrite"/>
    <property type="evidence" value="ECO:0007669"/>
    <property type="project" value="UniProtKB-SubCell"/>
</dbReference>
<dbReference type="GO" id="GO:0030496">
    <property type="term" value="C:midbody"/>
    <property type="evidence" value="ECO:0000250"/>
    <property type="project" value="UniProtKB"/>
</dbReference>
<dbReference type="GO" id="GO:0043025">
    <property type="term" value="C:neuronal cell body"/>
    <property type="evidence" value="ECO:0000250"/>
    <property type="project" value="UniProtKB"/>
</dbReference>
<dbReference type="GO" id="GO:0005634">
    <property type="term" value="C:nucleus"/>
    <property type="evidence" value="ECO:0000250"/>
    <property type="project" value="UniProtKB"/>
</dbReference>
<dbReference type="GO" id="GO:0043204">
    <property type="term" value="C:perikaryon"/>
    <property type="evidence" value="ECO:0007669"/>
    <property type="project" value="UniProtKB-SubCell"/>
</dbReference>
<dbReference type="GO" id="GO:0048471">
    <property type="term" value="C:perinuclear region of cytoplasm"/>
    <property type="evidence" value="ECO:0000250"/>
    <property type="project" value="UniProtKB"/>
</dbReference>
<dbReference type="GO" id="GO:0001891">
    <property type="term" value="C:phagocytic cup"/>
    <property type="evidence" value="ECO:0000250"/>
    <property type="project" value="UniProtKB"/>
</dbReference>
<dbReference type="GO" id="GO:1990904">
    <property type="term" value="C:ribonucleoprotein complex"/>
    <property type="evidence" value="ECO:0007669"/>
    <property type="project" value="UniProtKB-KW"/>
</dbReference>
<dbReference type="GO" id="GO:0005840">
    <property type="term" value="C:ribosome"/>
    <property type="evidence" value="ECO:0007669"/>
    <property type="project" value="UniProtKB-KW"/>
</dbReference>
<dbReference type="GO" id="GO:0005080">
    <property type="term" value="F:protein kinase C binding"/>
    <property type="evidence" value="ECO:0000250"/>
    <property type="project" value="UniProtKB"/>
</dbReference>
<dbReference type="GO" id="GO:0030292">
    <property type="term" value="F:protein tyrosine kinase inhibitor activity"/>
    <property type="evidence" value="ECO:0000250"/>
    <property type="project" value="UniProtKB"/>
</dbReference>
<dbReference type="GO" id="GO:0030971">
    <property type="term" value="F:receptor tyrosine kinase binding"/>
    <property type="evidence" value="ECO:0000250"/>
    <property type="project" value="UniProtKB"/>
</dbReference>
<dbReference type="GO" id="GO:0043022">
    <property type="term" value="F:ribosome binding"/>
    <property type="evidence" value="ECO:0000250"/>
    <property type="project" value="UniProtKB"/>
</dbReference>
<dbReference type="GO" id="GO:0042169">
    <property type="term" value="F:SH2 domain binding"/>
    <property type="evidence" value="ECO:0000250"/>
    <property type="project" value="UniProtKB"/>
</dbReference>
<dbReference type="GO" id="GO:0045182">
    <property type="term" value="F:translation regulator activity"/>
    <property type="evidence" value="ECO:0007669"/>
    <property type="project" value="InterPro"/>
</dbReference>
<dbReference type="GO" id="GO:0006915">
    <property type="term" value="P:apoptotic process"/>
    <property type="evidence" value="ECO:0007669"/>
    <property type="project" value="UniProtKB-KW"/>
</dbReference>
<dbReference type="GO" id="GO:0071363">
    <property type="term" value="P:cellular response to growth factor stimulus"/>
    <property type="evidence" value="ECO:0000250"/>
    <property type="project" value="UniProtKB"/>
</dbReference>
<dbReference type="GO" id="GO:0007369">
    <property type="term" value="P:gastrulation"/>
    <property type="evidence" value="ECO:0007669"/>
    <property type="project" value="UniProtKB-KW"/>
</dbReference>
<dbReference type="GO" id="GO:0030308">
    <property type="term" value="P:negative regulation of cell growth"/>
    <property type="evidence" value="ECO:0000250"/>
    <property type="project" value="UniProtKB"/>
</dbReference>
<dbReference type="GO" id="GO:0050765">
    <property type="term" value="P:negative regulation of phagocytosis"/>
    <property type="evidence" value="ECO:0000250"/>
    <property type="project" value="UniProtKB"/>
</dbReference>
<dbReference type="GO" id="GO:2001125">
    <property type="term" value="P:negative regulation of translational frameshifting"/>
    <property type="evidence" value="ECO:0000318"/>
    <property type="project" value="GO_Central"/>
</dbReference>
<dbReference type="GO" id="GO:0030178">
    <property type="term" value="P:negative regulation of Wnt signaling pathway"/>
    <property type="evidence" value="ECO:0000250"/>
    <property type="project" value="UniProtKB"/>
</dbReference>
<dbReference type="GO" id="GO:0043065">
    <property type="term" value="P:positive regulation of apoptotic process"/>
    <property type="evidence" value="ECO:0000250"/>
    <property type="project" value="UniProtKB"/>
</dbReference>
<dbReference type="GO" id="GO:0030335">
    <property type="term" value="P:positive regulation of cell migration"/>
    <property type="evidence" value="ECO:0000250"/>
    <property type="project" value="UniProtKB"/>
</dbReference>
<dbReference type="GO" id="GO:2000543">
    <property type="term" value="P:positive regulation of gastrulation"/>
    <property type="evidence" value="ECO:0000250"/>
    <property type="project" value="UniProtKB"/>
</dbReference>
<dbReference type="GO" id="GO:0042998">
    <property type="term" value="P:positive regulation of Golgi to plasma membrane protein transport"/>
    <property type="evidence" value="ECO:0000250"/>
    <property type="project" value="UniProtKB"/>
</dbReference>
<dbReference type="GO" id="GO:0043547">
    <property type="term" value="P:positive regulation of GTPase activity"/>
    <property type="evidence" value="ECO:0000250"/>
    <property type="project" value="UniProtKB"/>
</dbReference>
<dbReference type="GO" id="GO:0032436">
    <property type="term" value="P:positive regulation of proteasomal ubiquitin-dependent protein catabolic process"/>
    <property type="evidence" value="ECO:0000250"/>
    <property type="project" value="UniProtKB"/>
</dbReference>
<dbReference type="GO" id="GO:0001934">
    <property type="term" value="P:positive regulation of protein phosphorylation"/>
    <property type="evidence" value="ECO:0000250"/>
    <property type="project" value="UniProtKB"/>
</dbReference>
<dbReference type="GO" id="GO:0031334">
    <property type="term" value="P:positive regulation of protein-containing complex assembly"/>
    <property type="evidence" value="ECO:0000250"/>
    <property type="project" value="UniProtKB"/>
</dbReference>
<dbReference type="GO" id="GO:0016567">
    <property type="term" value="P:protein ubiquitination"/>
    <property type="evidence" value="ECO:0000250"/>
    <property type="project" value="UniProtKB"/>
</dbReference>
<dbReference type="GO" id="GO:0051726">
    <property type="term" value="P:regulation of cell cycle"/>
    <property type="evidence" value="ECO:0000250"/>
    <property type="project" value="UniProtKB"/>
</dbReference>
<dbReference type="GO" id="GO:0051302">
    <property type="term" value="P:regulation of cell division"/>
    <property type="evidence" value="ECO:0000250"/>
    <property type="project" value="UniProtKB"/>
</dbReference>
<dbReference type="GO" id="GO:2000114">
    <property type="term" value="P:regulation of establishment of cell polarity"/>
    <property type="evidence" value="ECO:0000250"/>
    <property type="project" value="UniProtKB"/>
</dbReference>
<dbReference type="GO" id="GO:0032880">
    <property type="term" value="P:regulation of protein localization"/>
    <property type="evidence" value="ECO:0000250"/>
    <property type="project" value="UniProtKB"/>
</dbReference>
<dbReference type="GO" id="GO:0072344">
    <property type="term" value="P:rescue of stalled ribosome"/>
    <property type="evidence" value="ECO:0000250"/>
    <property type="project" value="UniProtKB"/>
</dbReference>
<dbReference type="GO" id="GO:0048511">
    <property type="term" value="P:rhythmic process"/>
    <property type="evidence" value="ECO:0007669"/>
    <property type="project" value="UniProtKB-KW"/>
</dbReference>
<dbReference type="CDD" id="cd00200">
    <property type="entry name" value="WD40"/>
    <property type="match status" value="1"/>
</dbReference>
<dbReference type="FunFam" id="2.130.10.10:FF:001252">
    <property type="entry name" value="Receptor of activated protein C kinase 1"/>
    <property type="match status" value="1"/>
</dbReference>
<dbReference type="Gene3D" id="2.130.10.10">
    <property type="entry name" value="YVTN repeat-like/Quinoprotein amine dehydrogenase"/>
    <property type="match status" value="1"/>
</dbReference>
<dbReference type="InterPro" id="IPR020472">
    <property type="entry name" value="G-protein_beta_WD-40_rep"/>
</dbReference>
<dbReference type="InterPro" id="IPR045223">
    <property type="entry name" value="RACK1-like"/>
</dbReference>
<dbReference type="InterPro" id="IPR015943">
    <property type="entry name" value="WD40/YVTN_repeat-like_dom_sf"/>
</dbReference>
<dbReference type="InterPro" id="IPR019775">
    <property type="entry name" value="WD40_repeat_CS"/>
</dbReference>
<dbReference type="InterPro" id="IPR036322">
    <property type="entry name" value="WD40_repeat_dom_sf"/>
</dbReference>
<dbReference type="InterPro" id="IPR001680">
    <property type="entry name" value="WD40_rpt"/>
</dbReference>
<dbReference type="PANTHER" id="PTHR19868">
    <property type="entry name" value="RECEPTOR FOR ACTIVATED PROTEIN KINASE C RACK1"/>
    <property type="match status" value="1"/>
</dbReference>
<dbReference type="Pfam" id="PF00400">
    <property type="entry name" value="WD40"/>
    <property type="match status" value="7"/>
</dbReference>
<dbReference type="PRINTS" id="PR00320">
    <property type="entry name" value="GPROTEINBRPT"/>
</dbReference>
<dbReference type="SMART" id="SM00320">
    <property type="entry name" value="WD40"/>
    <property type="match status" value="7"/>
</dbReference>
<dbReference type="SUPFAM" id="SSF50978">
    <property type="entry name" value="WD40 repeat-like"/>
    <property type="match status" value="1"/>
</dbReference>
<dbReference type="PROSITE" id="PS00678">
    <property type="entry name" value="WD_REPEATS_1"/>
    <property type="match status" value="4"/>
</dbReference>
<dbReference type="PROSITE" id="PS50082">
    <property type="entry name" value="WD_REPEATS_2"/>
    <property type="match status" value="6"/>
</dbReference>
<dbReference type="PROSITE" id="PS50294">
    <property type="entry name" value="WD_REPEATS_REGION"/>
    <property type="match status" value="1"/>
</dbReference>
<sequence>MTEQMTLRGTLKGHNGWVTQIATTPQFPDMILSASRDKTIIMWKLTRDETNYGIPQRALRGHSHFVSDVVISSDGQFALSGSWDGTLRLWDLTTGTTTRRFVGHTKDVLSVAFSSDNRQIVSGSRDKTIKLWNTLGVCKYTVQDESHSEWVSCVRFSPNSSNPIIVSCGWDKLVKVWNLANCKLKTNHIGHTGYLNTVTVSPDGSLCASGGKDGQAMLWDLNEGKHLYTLDGGDIINALCFSPNRYWLCAATGPSIKIWDLEGKIIVDELKQEVISTSSKAEPPQCTSLAWSADGQTLFAGYTDNLVRVWQVTIGTR</sequence>
<gene>
    <name type="primary">RACK1</name>
    <name type="synonym">GNB2L1</name>
</gene>
<evidence type="ECO:0000250" key="1"/>
<evidence type="ECO:0000250" key="2">
    <source>
        <dbReference type="UniProtKB" id="P63244"/>
    </source>
</evidence>
<evidence type="ECO:0000250" key="3">
    <source>
        <dbReference type="UniProtKB" id="P68040"/>
    </source>
</evidence>
<evidence type="ECO:0000269" key="4">
    <source>
    </source>
</evidence>
<evidence type="ECO:0000305" key="5"/>
<protein>
    <recommendedName>
        <fullName evidence="5">Small ribosomal subunit protein RACK1</fullName>
    </recommendedName>
    <alternativeName>
        <fullName>Guanine nucleotide-binding protein subunit beta-2-like 1</fullName>
    </alternativeName>
    <alternativeName>
        <fullName>Receptor for activated C kinase</fullName>
    </alternativeName>
    <alternativeName>
        <fullName>Receptor of activated protein C kinase 1</fullName>
    </alternativeName>
    <alternativeName>
        <fullName>Receptor of activated protein kinase C 1</fullName>
    </alternativeName>
    <component>
        <recommendedName>
            <fullName>Small ribosomal subunit protein RACK1, N-terminally processed</fullName>
        </recommendedName>
        <alternativeName>
            <fullName>Receptor of activated protein C kinase 1, N-terminally processed</fullName>
        </alternativeName>
    </component>
</protein>
<comment type="function">
    <text evidence="2 3">Scaffolding protein involved in the recruitment, assembly and/or regulation of a variety of signaling molecules. Interacts with a wide variety of proteins and plays a role in many cellular processes. Component of the 40S ribosomal subunit involved in translational repression (By similarity). Involved in the initiation of the ribosome quality control (RQC), a pathway that takes place when a ribosome has stalled during translation, by promoting ubiquitination of a subset of 40S ribosomal subunits (By similarity). Binds to and stabilizes activated protein kinase C (PKC), increasing PKC-mediated phosphorylation (By similarity). May recruit activated PKC to the ribosome, leading to phosphorylation of EIF6 (By similarity). Inhibits the activity of SRC kinases including SRC, LCK and YES1 (By similarity). Inhibits cell growth by prolonging the G0/G1 phase of the cell cycle (By similarity). Enhances phosphorylation of BMAL1 by PRKCA and inhibits transcriptional activity of the BMAL1-CLOCK heterodimer (By similarity). Facilitates ligand-independent nuclear translocation of AR following PKC activation, represses AR transactivation activity and is required for phosphorylation of AR by SRC (By similarity). Modulates IGF1R-dependent integrin signaling and promotes cell spreading and contact with the extracellular matrix (By similarity). Involved in PKC-dependent translocation of ADAM12 to the cell membrane (By similarity). Promotes the ubiquitination and proteasome-mediated degradation of proteins such as CLEC1B and HIF1A (By similarity). Required for VANGL2 membrane localization, inhibits Wnt signaling, and regulates cellular polarization and oriented cell division during gastrulation (By similarity). Required for PTK2/FAK1 phosphorylation and dephosphorylation (By similarity). Regulates internalization of the muscarinic receptor CHRM2 (By similarity). Promotes apoptosis by increasing oligomerization of BAX and disrupting the interaction of BAX with the anti-apoptotic factor BCL2L (By similarity). Inhibits TRPM6 channel activity (By similarity). Regulates cell surface expression of some GPCRs such as TBXA2R (By similarity). Plays a role in regulation of FLT1-mediated cell migration (By similarity). Involved in the transport of ABCB4 from the Golgi to the apical bile canalicular membrane (By similarity). Acts as an adapter for the dephosphorylation and inactivation of AKT1 by promoting recruitment of PP2A phosphatase to AKT1 (By similarity).</text>
</comment>
<comment type="subunit">
    <text evidence="2 3">Monomer; also forms homodimers and homooligomers (By similarity). Interacts with CPNE3 (By similarity). May interact with ABCB4 (By similarity). Component of the small (40S) ribosomal subunit (By similarity). Interacts with LARP4B. Interacts with LARP4. Interacts with PKD2L1 (By similarity). Binds NHERF1 (By similarity). Forms a ternary complex with TRIM63 and PRKCE (By similarity). Interacts with HABP4, KRT1 and OTUB1 (By similarity). Interacts with SRC (via SH2 domain); the interaction is enhanced by tyrosine phosphorylation of RACK1 (By similarity). Recruited in a circadian manner into a nuclear complex which also includes BMAL1 and PRKCA (By similarity). Interacts with AR (By similarity). Interacts with IGF1R but not with INSR (By similarity). Interacts with ADAM12 (By similarity). Interacts with CLEC1B (via N-terminal region) and with HIF1A; the interaction promotes their degradation (By similarity). Interacts with RHOA; this enhances RHOA activation and promotes cell migration (By similarity). Interacts with CHRM2; the interaction regulates CHRM2 internalization (By similarity). Interacts with TRPM6 (via kinase domain) (By similarity). Interacts with PTK2/FAK1; required for PTK2/FAK1 phosphorylation and dephosphorylation (By similarity). Interacts with FLT1 (By similarity). Interacts with HRAS (By similarity). Interacts with SLC9A5; this interaction regulates SLC9A5 cell-surface targeting and SLC9A5 activity (By similarity). Interacts with SLC9A6; this interaction regulates the distribution of SLC9A6 between endosomes and the plasma membrane (By similarity). Interacts with AIM2; promoting association with PP2A phosphatase and dephosphorylation of AKT1 (By similarity).</text>
</comment>
<comment type="subcellular location">
    <subcellularLocation>
        <location evidence="2">Cell membrane</location>
        <topology evidence="2">Peripheral membrane protein</topology>
    </subcellularLocation>
    <subcellularLocation>
        <location evidence="2">Cytoplasm</location>
    </subcellularLocation>
    <subcellularLocation>
        <location evidence="2">Cytoplasm</location>
        <location evidence="2">Perinuclear region</location>
    </subcellularLocation>
    <subcellularLocation>
        <location evidence="2">Nucleus</location>
    </subcellularLocation>
    <subcellularLocation>
        <location evidence="3">Perikaryon</location>
    </subcellularLocation>
    <subcellularLocation>
        <location evidence="3">Cell projection</location>
        <location evidence="3">Dendrite</location>
    </subcellularLocation>
    <text evidence="2 3">Recruited to the plasma membrane through interaction with KRT1 which binds to membrane-bound ITGB1. Also associated with the membrane in oncogene-transformed cells. PKC activation induces translocation from the perinuclear region to the cell periphery (By similarity). In the brain, detected mainly in cell bodies and dendrites with little expression in axonal fibers or nuclei (By similarity).</text>
</comment>
<comment type="tissue specificity">
    <text evidence="4">Expressed in aortic endothelial cells (EC) and the endothelium of tumor neovascularizations. Differential gene expression is displayed in the corpora lutea of the early, mid, and late stages of the ovarian cycle that are associated with progressive, active, and regressive stages of angiogenesis.</text>
</comment>
<comment type="domain">
    <text evidence="2">The 7 WD repeats mediate protein-protein interactions with binding partners.</text>
</comment>
<comment type="PTM">
    <text evidence="1">Phosphorylated on Tyr-228 and/or Tyr-246 by SRC. This is required for binding to SRC (By similarity).</text>
</comment>
<comment type="similarity">
    <text evidence="5">Belongs to the WD repeat G protein beta family. Ribosomal protein RACK1 subfamily.</text>
</comment>